<sequence length="473" mass="53365">MSTELFSSTREEGSSGSGPSFRSNQRKMLNLLLERDTSFTVCPDVPRTPVGKFLGDSANLSILSGGTPKRCLDLSNLSSGEITATQLTTSADLDETGHLDSSGLQEVHLAGMNHDQHLMKCSPAQLLCSTPNGLDRGHRKRDAMCSSSANKENDNGNLVDSEMKYLGSPITTVPKLDKNPNLGEDQAEEISDELMEFSLKDQEAKVSRSGLYRSPSMPENLNRPRLKQVEKFKDNTIPDKVKKKYFSGQGKLRKGLCLKKTVSLCDITITQMLEEDSNQGHLIGDFSKVCALPTVSGKHQDLKYVNPETVAALLSGKFQGLIEKFYVIDCRYPYEYLGGHIQGALNLYSQEELFNFFLKKPIVPLDTQKRIIIVFHCEFSSERGPRMCRCLREEDRSLNQYPALYYPELYILKGGYRDFFPEYMELCEPQSYCPMHHQDHKTELLRCRSQSKVQEGERQLREQIALLVKDMSP</sequence>
<evidence type="ECO:0000250" key="1">
    <source>
        <dbReference type="UniProtKB" id="P30304"/>
    </source>
</evidence>
<evidence type="ECO:0000255" key="2">
    <source>
        <dbReference type="PROSITE-ProRule" id="PRU00173"/>
    </source>
</evidence>
<evidence type="ECO:0000256" key="3">
    <source>
        <dbReference type="SAM" id="MobiDB-lite"/>
    </source>
</evidence>
<evidence type="ECO:0000269" key="4">
    <source>
    </source>
</evidence>
<evidence type="ECO:0000269" key="5">
    <source>
    </source>
</evidence>
<evidence type="ECO:0000269" key="6">
    <source>
    </source>
</evidence>
<evidence type="ECO:0000269" key="7">
    <source>
    </source>
</evidence>
<evidence type="ECO:0000269" key="8">
    <source>
    </source>
</evidence>
<evidence type="ECO:0000269" key="9">
    <source>
    </source>
</evidence>
<evidence type="ECO:0000269" key="10">
    <source>
    </source>
</evidence>
<evidence type="ECO:0000269" key="11">
    <source>
    </source>
</evidence>
<evidence type="ECO:0000269" key="12">
    <source>
    </source>
</evidence>
<evidence type="ECO:0000269" key="13">
    <source>
    </source>
</evidence>
<evidence type="ECO:0000269" key="14">
    <source>
    </source>
</evidence>
<evidence type="ECO:0000269" key="15">
    <source>
    </source>
</evidence>
<evidence type="ECO:0000269" key="16">
    <source>
    </source>
</evidence>
<evidence type="ECO:0000269" key="17">
    <source>
    </source>
</evidence>
<evidence type="ECO:0000303" key="18">
    <source>
    </source>
</evidence>
<evidence type="ECO:0000303" key="19">
    <source>
    </source>
</evidence>
<evidence type="ECO:0000305" key="20"/>
<evidence type="ECO:0000305" key="21">
    <source>
    </source>
</evidence>
<evidence type="ECO:0007744" key="22">
    <source>
    </source>
</evidence>
<evidence type="ECO:0007744" key="23">
    <source>
    </source>
</evidence>
<evidence type="ECO:0007744" key="24">
    <source>
    </source>
</evidence>
<evidence type="ECO:0007744" key="25">
    <source>
    </source>
</evidence>
<evidence type="ECO:0007744" key="26">
    <source>
    </source>
</evidence>
<evidence type="ECO:0007829" key="27">
    <source>
        <dbReference type="PDB" id="3BZI"/>
    </source>
</evidence>
<evidence type="ECO:0007829" key="28">
    <source>
        <dbReference type="PDB" id="3OP3"/>
    </source>
</evidence>
<reference key="1">
    <citation type="journal article" date="1990" name="Proc. Natl. Acad. Sci. U.S.A.">
        <title>Human homolog of fission yeast cdc25 mitotic inducer is predominantly expressed in G2.</title>
        <authorList>
            <person name="Sadhu K."/>
            <person name="Reed B.I."/>
            <person name="Richardson H."/>
            <person name="Russell P."/>
        </authorList>
    </citation>
    <scope>NUCLEOTIDE SEQUENCE [MRNA] (ISOFORM 1)</scope>
    <scope>DEVELOPMENTAL STAGE</scope>
    <scope>VARIANT CYS-70</scope>
</reference>
<reference key="2">
    <citation type="journal article" date="2000" name="Int. J. Oncol.">
        <title>An additional transcript of the cdc25C gene from A431 cells encodes a functional protein.</title>
        <authorList>
            <person name="Bureik M."/>
            <person name="Rief N."/>
            <person name="Drescher R."/>
            <person name="Jungbluth A."/>
            <person name="Montenarh M."/>
            <person name="Wagner P."/>
        </authorList>
    </citation>
    <scope>NUCLEOTIDE SEQUENCE [MRNA] (ISOFORM 5)</scope>
</reference>
<reference key="3">
    <citation type="submission" date="2003-12" db="EMBL/GenBank/DDBJ databases">
        <authorList>
            <consortium name="NIEHS SNPs program"/>
        </authorList>
    </citation>
    <scope>NUCLEOTIDE SEQUENCE [GENOMIC DNA]</scope>
</reference>
<reference key="4">
    <citation type="submission" date="2005-09" db="EMBL/GenBank/DDBJ databases">
        <authorList>
            <person name="Mural R.J."/>
            <person name="Istrail S."/>
            <person name="Sutton G.G."/>
            <person name="Florea L."/>
            <person name="Halpern A.L."/>
            <person name="Mobarry C.M."/>
            <person name="Lippert R."/>
            <person name="Walenz B."/>
            <person name="Shatkay H."/>
            <person name="Dew I."/>
            <person name="Miller J.R."/>
            <person name="Flanigan M.J."/>
            <person name="Edwards N.J."/>
            <person name="Bolanos R."/>
            <person name="Fasulo D."/>
            <person name="Halldorsson B.V."/>
            <person name="Hannenhalli S."/>
            <person name="Turner R."/>
            <person name="Yooseph S."/>
            <person name="Lu F."/>
            <person name="Nusskern D.R."/>
            <person name="Shue B.C."/>
            <person name="Zheng X.H."/>
            <person name="Zhong F."/>
            <person name="Delcher A.L."/>
            <person name="Huson D.H."/>
            <person name="Kravitz S.A."/>
            <person name="Mouchard L."/>
            <person name="Reinert K."/>
            <person name="Remington K.A."/>
            <person name="Clark A.G."/>
            <person name="Waterman M.S."/>
            <person name="Eichler E.E."/>
            <person name="Adams M.D."/>
            <person name="Hunkapiller M.W."/>
            <person name="Myers E.W."/>
            <person name="Venter J.C."/>
        </authorList>
    </citation>
    <scope>NUCLEOTIDE SEQUENCE [LARGE SCALE GENOMIC DNA]</scope>
</reference>
<reference key="5">
    <citation type="journal article" date="2004" name="Genome Res.">
        <title>The status, quality, and expansion of the NIH full-length cDNA project: the Mammalian Gene Collection (MGC).</title>
        <authorList>
            <consortium name="The MGC Project Team"/>
        </authorList>
    </citation>
    <scope>NUCLEOTIDE SEQUENCE [LARGE SCALE MRNA] (ISOFORM 1)</scope>
    <scope>VARIANT CYS-70</scope>
    <source>
        <tissue>Skin</tissue>
    </source>
</reference>
<reference key="6">
    <citation type="journal article" date="2000" name="Eur. J. Cell Biol.">
        <title>Alternative splicing in the regulatory region of the human phosphatases CDC25A and CDC25C.</title>
        <authorList>
            <person name="Wegener S."/>
            <person name="Hampe W."/>
            <person name="Herrmann D."/>
            <person name="Schaller H.C."/>
        </authorList>
    </citation>
    <scope>NUCLEOTIDE SEQUENCE [MRNA] OF 32-210 (ISOFORMS 2; 4 AND 5)</scope>
    <scope>VARIANT CYS-70</scope>
</reference>
<reference key="7">
    <citation type="journal article" date="2001" name="Lab. Invest.">
        <title>Differential expression of cdc25 cell-cycle-activating phosphatases in human colorectal carcinoma.</title>
        <authorList>
            <person name="Hernandez S."/>
            <person name="Bessa X."/>
            <person name="Bea S."/>
            <person name="Hernandez L."/>
            <person name="Nadal A."/>
            <person name="Mallofre C."/>
            <person name="Muntane J."/>
            <person name="Castells A."/>
            <person name="Fernandez P.L."/>
            <person name="Cardesa A."/>
            <person name="Campo E."/>
        </authorList>
    </citation>
    <scope>PARTIAL NUCLEOTIDE SEQUENCE [MRNA] (ISOFORM 5)</scope>
    <source>
        <tissue>Colon carcinoma</tissue>
    </source>
</reference>
<reference key="8">
    <citation type="journal article" date="1994" name="J. Biol. Chem.">
        <title>Activation of p34cdc2 protein kinase by microinjection of human cdc25C into mammalian cells. Requirement for prior phosphorylation of cdc25C by p34cdc2 on sites phosphorylated at mitosis.</title>
        <authorList>
            <person name="Strausfeld U."/>
            <person name="Fernandez A."/>
            <person name="Capony J.P."/>
            <person name="Girard F."/>
            <person name="Lautredou N."/>
            <person name="Derancourt J."/>
            <person name="Labbe J.C."/>
            <person name="Lamb N.J."/>
        </authorList>
    </citation>
    <scope>FUNCTION</scope>
    <scope>CATALYTIC ACTIVITY</scope>
    <scope>SUBCELLULAR LOCATION</scope>
    <scope>PHOSPHORYLATION AT THR-48; THR-67; SER-122; THR-130; SER-168 AND SER-214</scope>
</reference>
<reference key="9">
    <citation type="journal article" date="1999" name="Oncogene">
        <title>The physical association and phosphorylation of Cdc25C protein phosphatase by Prk.</title>
        <authorList>
            <person name="Ouyang B."/>
            <person name="Li W."/>
            <person name="Pan H."/>
            <person name="Meadows J."/>
            <person name="Hoffmann I."/>
            <person name="Dai W."/>
        </authorList>
    </citation>
    <scope>PHOSPHORYLATION BY PLK3</scope>
</reference>
<reference key="10">
    <citation type="journal article" date="2000" name="Cell. Signal.">
        <title>The human polo-like kinase, PLK, regulates cdc2/cyclin B through phosphorylation and activation of the cdc25C phosphatase.</title>
        <authorList>
            <person name="Roshak A.K."/>
            <person name="Capper E.A."/>
            <person name="Imburgia C."/>
            <person name="Fornwald J."/>
            <person name="Scott G."/>
            <person name="Marshall L.A."/>
        </authorList>
    </citation>
    <scope>PHOSPHORYLATION BY PLK1</scope>
</reference>
<reference key="11">
    <citation type="journal article" date="2001" name="Nature">
        <title>Initiation of a G2/M checkpoint after ultraviolet radiation requires p38 kinase.</title>
        <authorList>
            <person name="Bulavin D.V."/>
            <person name="Higashimoto Y."/>
            <person name="Popoff I.J."/>
            <person name="Gaarde W.A."/>
            <person name="Basrur V."/>
            <person name="Potapova O."/>
            <person name="Appella E."/>
            <person name="Fornace A.J. Jr."/>
        </authorList>
    </citation>
    <scope>PHOSPHORYLATION AT SER-216</scope>
    <scope>INTERACTION WITH MAPK14 AND 14-3-3 PROTEINS</scope>
</reference>
<reference key="12">
    <citation type="journal article" date="2003" name="EMBO J.">
        <title>Functional analysis of C-TAK1 substrate binding and identification of PKP2 as a new C-TAK1 substrate.</title>
        <authorList>
            <person name="Mueller J."/>
            <person name="Ritt D.A."/>
            <person name="Copeland T.D."/>
            <person name="Morrison D.K."/>
        </authorList>
    </citation>
    <scope>INTERACTION WITH MARK3</scope>
    <scope>PHOSPHORYLATION AT SER-216</scope>
    <scope>MUTAGENESIS OF LEU-211; SER-216; LEU-221 AND 242-LYS--LYS-244</scope>
</reference>
<reference key="13">
    <citation type="journal article" date="2003" name="Science">
        <title>Proteomic screen finds pSer/pThr-binding domain localizing Plk1 to mitotic substrates.</title>
        <authorList>
            <person name="Elia A.E."/>
            <person name="Cantley L.C."/>
            <person name="Yaffe M.B."/>
        </authorList>
    </citation>
    <scope>INTERACTION WITH PLK1</scope>
    <scope>PHOSPHORYLATION AT SER-129 AND THR-130</scope>
    <scope>MUTAGENESIS OF SER-129 AND THR-130</scope>
</reference>
<reference key="14">
    <citation type="journal article" date="2004" name="J. Biol. Chem.">
        <title>Human SAD1 kinase is involved in UV-induced DNA damage checkpoint function.</title>
        <authorList>
            <person name="Lu R."/>
            <person name="Niida H."/>
            <person name="Nakanishi M."/>
        </authorList>
    </citation>
    <scope>PHOSPHORYLATION AT SER-216</scope>
    <source>
        <tissue>Testis</tissue>
    </source>
</reference>
<reference key="15">
    <citation type="journal article" date="2004" name="Oncogene">
        <title>Cdc25C phosphorylation on serine 191 by Plk3 promotes its nuclear translocation.</title>
        <authorList>
            <person name="Bahassi el M."/>
            <person name="Hennigan R.F."/>
            <person name="Myer D.L."/>
            <person name="Stambrook P.J."/>
        </authorList>
    </citation>
    <scope>SUBCELLULAR LOCATION</scope>
    <scope>PHOSPHORYLATION AT SER-191 AND SER-198</scope>
    <scope>MUTAGENESIS OF SER-191</scope>
</reference>
<reference key="16">
    <citation type="journal article" date="2004" name="Virology">
        <title>The human immunodeficiency virus Vpr protein binds Cdc25C: implications for G2 arrest.</title>
        <authorList>
            <person name="Goh W.C."/>
            <person name="Manel N."/>
            <person name="Emerman M."/>
        </authorList>
    </citation>
    <scope>INTERACTION WITH HIV-1 VPR (MICROBIAL INFECTION)</scope>
    <scope>MUTAGENESIS OF GLU-352 AND LYS-359</scope>
</reference>
<reference key="17">
    <citation type="journal article" date="2005" name="Mol. Cell">
        <title>MAPKAP kinase-2 is a cell cycle checkpoint kinase that regulates the G2/M transition and S phase progression in response to UV irradiation.</title>
        <authorList>
            <person name="Manke I.A."/>
            <person name="Nguyen A."/>
            <person name="Lim D."/>
            <person name="Stewart M.Q."/>
            <person name="Elia A.E."/>
            <person name="Yaffe M.B."/>
        </authorList>
    </citation>
    <scope>PHOSPHORYLATION AT SER-216 BY MAPKAPK2</scope>
</reference>
<reference key="18">
    <citation type="journal article" date="2008" name="Cell Cycle">
        <title>Human Plk4 phosphorylates Cdc25C.</title>
        <authorList>
            <person name="Bonni S."/>
            <person name="Ganuelas M.L."/>
            <person name="Petrinac S."/>
            <person name="Hudson J.W."/>
        </authorList>
    </citation>
    <scope>PHOSPHORYLATION BY PLK4</scope>
</reference>
<reference key="19">
    <citation type="journal article" date="2008" name="Mol. Cell">
        <title>Kinase-selective enrichment enables quantitative phosphoproteomics of the kinome across the cell cycle.</title>
        <authorList>
            <person name="Daub H."/>
            <person name="Olsen J.V."/>
            <person name="Bairlein M."/>
            <person name="Gnad F."/>
            <person name="Oppermann F.S."/>
            <person name="Korner R."/>
            <person name="Greff Z."/>
            <person name="Keri G."/>
            <person name="Stemmann O."/>
            <person name="Mann M."/>
        </authorList>
    </citation>
    <scope>PHOSPHORYLATION [LARGE SCALE ANALYSIS] AT SER-64; SER-168 AND SER-472</scope>
    <scope>PHOSPHORYLATION [LARGE SCALE ANALYSIS] AT SER-61 (ISOFORMS 4 AND 5)</scope>
    <scope>IDENTIFICATION BY MASS SPECTROMETRY [LARGE SCALE ANALYSIS]</scope>
    <source>
        <tissue>Cervix carcinoma</tissue>
    </source>
</reference>
<reference key="20">
    <citation type="journal article" date="2008" name="Proc. Natl. Acad. Sci. U.S.A.">
        <title>A quantitative atlas of mitotic phosphorylation.</title>
        <authorList>
            <person name="Dephoure N."/>
            <person name="Zhou C."/>
            <person name="Villen J."/>
            <person name="Beausoleil S.A."/>
            <person name="Bakalarski C.E."/>
            <person name="Elledge S.J."/>
            <person name="Gygi S.P."/>
        </authorList>
    </citation>
    <scope>PHOSPHORYLATION [LARGE SCALE ANALYSIS] AT SER-38; THR-48; SER-57; SER-61; SER-64 AND THR-67</scope>
    <scope>IDENTIFICATION BY MASS SPECTROMETRY [LARGE SCALE ANALYSIS]</scope>
    <source>
        <tissue>Cervix carcinoma</tissue>
    </source>
</reference>
<reference key="21">
    <citation type="journal article" date="2010" name="Sci. Signal.">
        <title>Quantitative phosphoproteomics reveals widespread full phosphorylation site occupancy during mitosis.</title>
        <authorList>
            <person name="Olsen J.V."/>
            <person name="Vermeulen M."/>
            <person name="Santamaria A."/>
            <person name="Kumar C."/>
            <person name="Miller M.L."/>
            <person name="Jensen L.J."/>
            <person name="Gnad F."/>
            <person name="Cox J."/>
            <person name="Jensen T.S."/>
            <person name="Nigg E.A."/>
            <person name="Brunak S."/>
            <person name="Mann M."/>
        </authorList>
    </citation>
    <scope>PHOSPHORYLATION [LARGE SCALE ANALYSIS] AT SER-61; SER-64 AND THR-67</scope>
    <scope>IDENTIFICATION BY MASS SPECTROMETRY [LARGE SCALE ANALYSIS]</scope>
    <source>
        <tissue>Cervix carcinoma</tissue>
    </source>
</reference>
<reference key="22">
    <citation type="journal article" date="2012" name="Proc. Natl. Acad. Sci. U.S.A.">
        <title>N-terminal acetylome analyses and functional insights of the N-terminal acetyltransferase NatB.</title>
        <authorList>
            <person name="Van Damme P."/>
            <person name="Lasa M."/>
            <person name="Polevoda B."/>
            <person name="Gazquez C."/>
            <person name="Elosegui-Artola A."/>
            <person name="Kim D.S."/>
            <person name="De Juan-Pardo E."/>
            <person name="Demeyer K."/>
            <person name="Hole K."/>
            <person name="Larrea E."/>
            <person name="Timmerman E."/>
            <person name="Prieto J."/>
            <person name="Arnesen T."/>
            <person name="Sherman F."/>
            <person name="Gevaert K."/>
            <person name="Aldabe R."/>
        </authorList>
    </citation>
    <scope>ACETYLATION [LARGE SCALE ANALYSIS] AT SER-2</scope>
    <scope>CLEAVAGE OF INITIATOR METHIONINE [LARGE SCALE ANALYSIS]</scope>
    <scope>IDENTIFICATION BY MASS SPECTROMETRY [LARGE SCALE ANALYSIS]</scope>
</reference>
<reference key="23">
    <citation type="journal article" date="2013" name="J. Proteome Res.">
        <title>Toward a comprehensive characterization of a human cancer cell phosphoproteome.</title>
        <authorList>
            <person name="Zhou H."/>
            <person name="Di Palma S."/>
            <person name="Preisinger C."/>
            <person name="Peng M."/>
            <person name="Polat A.N."/>
            <person name="Heck A.J."/>
            <person name="Mohammed S."/>
        </authorList>
    </citation>
    <scope>PHOSPHORYLATION [LARGE SCALE ANALYSIS] AT SER-20; SER-38 AND SER-216</scope>
    <scope>IDENTIFICATION BY MASS SPECTROMETRY [LARGE SCALE ANALYSIS]</scope>
    <source>
        <tissue>Cervix carcinoma</tissue>
        <tissue>Erythroleukemia</tissue>
    </source>
</reference>
<keyword id="KW-0002">3D-structure</keyword>
<keyword id="KW-0007">Acetylation</keyword>
<keyword id="KW-0025">Alternative splicing</keyword>
<keyword id="KW-0131">Cell cycle</keyword>
<keyword id="KW-0132">Cell division</keyword>
<keyword id="KW-0945">Host-virus interaction</keyword>
<keyword id="KW-0378">Hydrolase</keyword>
<keyword id="KW-0498">Mitosis</keyword>
<keyword id="KW-0539">Nucleus</keyword>
<keyword id="KW-0597">Phosphoprotein</keyword>
<keyword id="KW-0904">Protein phosphatase</keyword>
<keyword id="KW-1267">Proteomics identification</keyword>
<keyword id="KW-1185">Reference proteome</keyword>
<protein>
    <recommendedName>
        <fullName>M-phase inducer phosphatase 3</fullName>
        <ecNumber evidence="21">3.1.3.48</ecNumber>
    </recommendedName>
    <alternativeName>
        <fullName>Dual specificity phosphatase Cdc25C</fullName>
    </alternativeName>
</protein>
<comment type="function">
    <text evidence="17">Functions as a dosage-dependent inducer in mitotic control. Tyrosine protein phosphatase required for progression of the cell cycle (PubMed:8119945). When phosphorylated, highly effective in activating G2 cells into prophase (PubMed:8119945). Directly dephosphorylates CDK1 and activates its kinase activity (PubMed:8119945).</text>
</comment>
<comment type="catalytic activity">
    <reaction evidence="21">
        <text>O-phospho-L-tyrosyl-[protein] + H2O = L-tyrosyl-[protein] + phosphate</text>
        <dbReference type="Rhea" id="RHEA:10684"/>
        <dbReference type="Rhea" id="RHEA-COMP:10136"/>
        <dbReference type="Rhea" id="RHEA-COMP:20101"/>
        <dbReference type="ChEBI" id="CHEBI:15377"/>
        <dbReference type="ChEBI" id="CHEBI:43474"/>
        <dbReference type="ChEBI" id="CHEBI:46858"/>
        <dbReference type="ChEBI" id="CHEBI:61978"/>
        <dbReference type="EC" id="3.1.3.48"/>
    </reaction>
    <physiologicalReaction direction="left-to-right" evidence="21">
        <dbReference type="Rhea" id="RHEA:10685"/>
    </physiologicalReaction>
</comment>
<comment type="subunit">
    <text evidence="7 8 9">Interacts with MAPK14 and 14-3-3 proteins (PubMed:11333986). When phosphorylated on Ser-129 and/or Thr-130, interacts with PLK1 (PubMed:12595692). Interacts with MARK3/C-TAK1 (PubMed:12941695).</text>
</comment>
<comment type="subunit">
    <text evidence="11">(Microbial infection) Interacts with HIV-1 Vpr; this interaction inactivates CDC25C phosphatase activity.</text>
</comment>
<comment type="interaction">
    <interactant intactId="EBI-974439">
        <id>P30307</id>
    </interactant>
    <interactant intactId="EBI-444308">
        <id>P06493</id>
        <label>CDK1</label>
    </interactant>
    <organismsDiffer>false</organismsDiffer>
    <experiments>3</experiments>
</comment>
<comment type="interaction">
    <interactant intactId="EBI-974439">
        <id>P30307</id>
    </interactant>
    <interactant intactId="EBI-974488">
        <id>O14757</id>
        <label>CHEK1</label>
    </interactant>
    <organismsDiffer>false</organismsDiffer>
    <experiments>2</experiments>
</comment>
<comment type="interaction">
    <interactant intactId="EBI-974439">
        <id>P30307</id>
    </interactant>
    <interactant intactId="EBI-1216080">
        <id>Q9Y250</id>
        <label>LZTS1</label>
    </interactant>
    <organismsDiffer>false</organismsDiffer>
    <experiments>2</experiments>
</comment>
<comment type="interaction">
    <interactant intactId="EBI-974439">
        <id>P30307</id>
    </interactant>
    <interactant intactId="EBI-476768">
        <id>P53350</id>
        <label>PLK1</label>
    </interactant>
    <organismsDiffer>false</organismsDiffer>
    <experiments>5</experiments>
</comment>
<comment type="interaction">
    <interactant intactId="EBI-974439">
        <id>P30307</id>
    </interactant>
    <interactant intactId="EBI-359815">
        <id>P31946</id>
        <label>YWHAB</label>
    </interactant>
    <organismsDiffer>false</organismsDiffer>
    <experiments>8</experiments>
</comment>
<comment type="interaction">
    <interactant intactId="EBI-974439">
        <id>P30307</id>
    </interactant>
    <interactant intactId="EBI-356498">
        <id>P62258</id>
        <label>YWHAE</label>
    </interactant>
    <organismsDiffer>false</organismsDiffer>
    <experiments>6</experiments>
</comment>
<comment type="interaction">
    <interactant intactId="EBI-974439">
        <id>P30307</id>
    </interactant>
    <interactant intactId="EBI-347088">
        <id>P63104</id>
        <label>YWHAZ</label>
    </interactant>
    <organismsDiffer>false</organismsDiffer>
    <experiments>3</experiments>
</comment>
<comment type="subcellular location">
    <subcellularLocation>
        <location evidence="10 17">Nucleus</location>
    </subcellularLocation>
</comment>
<comment type="alternative products">
    <event type="alternative splicing"/>
    <isoform>
        <id>P30307-1</id>
        <name>1</name>
        <name>CDC25C1</name>
        <sequence type="displayed"/>
    </isoform>
    <isoform>
        <id>P30307-2</id>
        <name>2</name>
        <name>CDC25C2</name>
        <sequence type="described" ref="VSP_000864"/>
    </isoform>
    <isoform>
        <id>P30307-5</id>
        <name>3</name>
        <name>CDC25C3</name>
        <sequence type="not described"/>
    </isoform>
    <isoform>
        <id>P30307-3</id>
        <name>4</name>
        <name>CDC25C4</name>
        <sequence type="described" ref="VSP_000863"/>
    </isoform>
    <isoform>
        <id>P30307-4</id>
        <name>5</name>
        <name>CDC25C5</name>
        <name>Cdc25Cdm</name>
        <sequence type="described" ref="VSP_000863 VSP_000864"/>
    </isoform>
</comment>
<comment type="developmental stage">
    <text evidence="16">Expressed predominantly in G2 phase.</text>
</comment>
<comment type="PTM">
    <text evidence="4 6 7 10 12 14 15 17">Phosphorylated by CHEK1 and MAPK14 at Ser-216. This phosphorylation creates a binding site for 14-3-3 protein and inhibits the phosphatase. Phosphorylated by PLK4. Phosphorylated by PLK1, leading to activate the phosphatase activity. Phosphorylation by PLK3 at Ser-191 promotes nuclear translocation. Ser-198 is a minor phosphorylation site. Was initially reported to be phosphorylated by PLK3 at Ser-216 (PubMed:10557092). However, such phosphorylation by PLK3 was not confirmed by other groups. Phosphorylation at Thr-48, Thr-67, Ser-122, Thr-130, Ser-168 and Ser-214 occurs at G2 and G2-M transition and is probably catalyzed by CDK1. Ser-168 phosphorylation levels are lower than those at the other 5 CDK1 sites. Phosphorylation by CDK1 leads to increased activity.</text>
</comment>
<comment type="similarity">
    <text evidence="20">Belongs to the MPI phosphatase family.</text>
</comment>
<organism>
    <name type="scientific">Homo sapiens</name>
    <name type="common">Human</name>
    <dbReference type="NCBI Taxonomy" id="9606"/>
    <lineage>
        <taxon>Eukaryota</taxon>
        <taxon>Metazoa</taxon>
        <taxon>Chordata</taxon>
        <taxon>Craniata</taxon>
        <taxon>Vertebrata</taxon>
        <taxon>Euteleostomi</taxon>
        <taxon>Mammalia</taxon>
        <taxon>Eutheria</taxon>
        <taxon>Euarchontoglires</taxon>
        <taxon>Primates</taxon>
        <taxon>Haplorrhini</taxon>
        <taxon>Catarrhini</taxon>
        <taxon>Hominidae</taxon>
        <taxon>Homo</taxon>
    </lineage>
</organism>
<proteinExistence type="evidence at protein level"/>
<dbReference type="EC" id="3.1.3.48" evidence="21"/>
<dbReference type="EMBL" id="M34065">
    <property type="protein sequence ID" value="AAA35666.1"/>
    <property type="molecule type" value="mRNA"/>
</dbReference>
<dbReference type="EMBL" id="AJ304504">
    <property type="protein sequence ID" value="CAC19192.1"/>
    <property type="molecule type" value="mRNA"/>
</dbReference>
<dbReference type="EMBL" id="AY497474">
    <property type="protein sequence ID" value="AAR32098.1"/>
    <property type="molecule type" value="Genomic_DNA"/>
</dbReference>
<dbReference type="EMBL" id="CH471062">
    <property type="protein sequence ID" value="EAW62145.1"/>
    <property type="molecule type" value="Genomic_DNA"/>
</dbReference>
<dbReference type="EMBL" id="CH471062">
    <property type="protein sequence ID" value="EAW62149.1"/>
    <property type="molecule type" value="Genomic_DNA"/>
</dbReference>
<dbReference type="EMBL" id="BC019089">
    <property type="protein sequence ID" value="AAH19089.1"/>
    <property type="molecule type" value="mRNA"/>
</dbReference>
<dbReference type="EMBL" id="AF277723">
    <property type="protein sequence ID" value="AAG41885.1"/>
    <property type="molecule type" value="mRNA"/>
</dbReference>
<dbReference type="EMBL" id="AF277725">
    <property type="protein sequence ID" value="AAG41887.1"/>
    <property type="molecule type" value="mRNA"/>
</dbReference>
<dbReference type="EMBL" id="AF277726">
    <property type="protein sequence ID" value="AAG41888.1"/>
    <property type="molecule type" value="mRNA"/>
</dbReference>
<dbReference type="EMBL" id="AF312681">
    <property type="protein sequence ID" value="AAL26835.1"/>
    <property type="molecule type" value="mRNA"/>
</dbReference>
<dbReference type="CCDS" id="CCDS4202.1">
    <molecule id="P30307-1"/>
</dbReference>
<dbReference type="CCDS" id="CCDS4203.1">
    <molecule id="P30307-4"/>
</dbReference>
<dbReference type="PIR" id="I59168">
    <property type="entry name" value="A38874"/>
</dbReference>
<dbReference type="RefSeq" id="NP_001274511.1">
    <molecule id="P30307-1"/>
    <property type="nucleotide sequence ID" value="NM_001287582.2"/>
</dbReference>
<dbReference type="RefSeq" id="NP_001305027.1">
    <property type="nucleotide sequence ID" value="NM_001318098.1"/>
</dbReference>
<dbReference type="RefSeq" id="NP_001350957.1">
    <molecule id="P30307-3"/>
    <property type="nucleotide sequence ID" value="NM_001364028.1"/>
</dbReference>
<dbReference type="RefSeq" id="NP_001781.2">
    <molecule id="P30307-1"/>
    <property type="nucleotide sequence ID" value="NM_001790.5"/>
</dbReference>
<dbReference type="RefSeq" id="NP_073720.1">
    <molecule id="P30307-4"/>
    <property type="nucleotide sequence ID" value="NM_022809.4"/>
</dbReference>
<dbReference type="RefSeq" id="XP_011542064.1">
    <property type="nucleotide sequence ID" value="XM_011543762.1"/>
</dbReference>
<dbReference type="RefSeq" id="XP_047273908.1">
    <molecule id="P30307-1"/>
    <property type="nucleotide sequence ID" value="XM_047417952.1"/>
</dbReference>
<dbReference type="RefSeq" id="XP_054209901.1">
    <molecule id="P30307-1"/>
    <property type="nucleotide sequence ID" value="XM_054353926.1"/>
</dbReference>
<dbReference type="PDB" id="2OJX">
    <property type="method" value="X-ray"/>
    <property type="resolution" value="2.85 A"/>
    <property type="chains" value="E=126-134"/>
</dbReference>
<dbReference type="PDB" id="3BZI">
    <property type="method" value="X-ray"/>
    <property type="resolution" value="2.10 A"/>
    <property type="chains" value="E=126-134"/>
</dbReference>
<dbReference type="PDB" id="3OP3">
    <property type="method" value="X-ray"/>
    <property type="resolution" value="2.63 A"/>
    <property type="chains" value="A=270-462"/>
</dbReference>
<dbReference type="PDB" id="5M35">
    <property type="method" value="X-ray"/>
    <property type="resolution" value="2.38 A"/>
    <property type="chains" value="C/D=207-244"/>
</dbReference>
<dbReference type="PDB" id="5M36">
    <property type="method" value="X-ray"/>
    <property type="resolution" value="2.45 A"/>
    <property type="chains" value="C/D=207-244"/>
</dbReference>
<dbReference type="PDB" id="5M37">
    <property type="method" value="X-ray"/>
    <property type="resolution" value="2.35 A"/>
    <property type="chains" value="C/D=207-226"/>
</dbReference>
<dbReference type="PDBsum" id="2OJX"/>
<dbReference type="PDBsum" id="3BZI"/>
<dbReference type="PDBsum" id="3OP3"/>
<dbReference type="PDBsum" id="5M35"/>
<dbReference type="PDBsum" id="5M36"/>
<dbReference type="PDBsum" id="5M37"/>
<dbReference type="SMR" id="P30307"/>
<dbReference type="BioGRID" id="107430">
    <property type="interactions" value="165"/>
</dbReference>
<dbReference type="CORUM" id="P30307"/>
<dbReference type="DIP" id="DIP-24183N"/>
<dbReference type="FunCoup" id="P30307">
    <property type="interactions" value="2273"/>
</dbReference>
<dbReference type="IntAct" id="P30307">
    <property type="interactions" value="37"/>
</dbReference>
<dbReference type="MINT" id="P30307"/>
<dbReference type="STRING" id="9606.ENSP00000321656"/>
<dbReference type="BindingDB" id="P30307"/>
<dbReference type="ChEMBL" id="CHEMBL2378"/>
<dbReference type="DrugCentral" id="P30307"/>
<dbReference type="DEPOD" id="CDC25C"/>
<dbReference type="GlyGen" id="P30307">
    <property type="glycosylation" value="1 site, 1 O-linked glycan (1 site)"/>
</dbReference>
<dbReference type="iPTMnet" id="P30307"/>
<dbReference type="PhosphoSitePlus" id="P30307"/>
<dbReference type="BioMuta" id="CDC25C"/>
<dbReference type="DMDM" id="116242631"/>
<dbReference type="CPTAC" id="CPTAC-5906"/>
<dbReference type="jPOST" id="P30307"/>
<dbReference type="MassIVE" id="P30307"/>
<dbReference type="PaxDb" id="9606-ENSP00000321656"/>
<dbReference type="PeptideAtlas" id="P30307"/>
<dbReference type="ProteomicsDB" id="54658">
    <molecule id="P30307-1"/>
</dbReference>
<dbReference type="ProteomicsDB" id="54659">
    <molecule id="P30307-2"/>
</dbReference>
<dbReference type="ProteomicsDB" id="54660">
    <molecule id="P30307-3"/>
</dbReference>
<dbReference type="ProteomicsDB" id="54661">
    <molecule id="P30307-4"/>
</dbReference>
<dbReference type="Pumba" id="P30307"/>
<dbReference type="Antibodypedia" id="3534">
    <property type="antibodies" value="1095 antibodies from 44 providers"/>
</dbReference>
<dbReference type="CPTC" id="P30307">
    <property type="antibodies" value="1 antibody"/>
</dbReference>
<dbReference type="DNASU" id="995"/>
<dbReference type="Ensembl" id="ENST00000323760.11">
    <molecule id="P30307-1"/>
    <property type="protein sequence ID" value="ENSP00000321656.6"/>
    <property type="gene ID" value="ENSG00000158402.21"/>
</dbReference>
<dbReference type="Ensembl" id="ENST00000415130.6">
    <molecule id="P30307-4"/>
    <property type="protein sequence ID" value="ENSP00000392631.2"/>
    <property type="gene ID" value="ENSG00000158402.21"/>
</dbReference>
<dbReference type="Ensembl" id="ENST00000513970.5">
    <molecule id="P30307-1"/>
    <property type="protein sequence ID" value="ENSP00000424795.1"/>
    <property type="gene ID" value="ENSG00000158402.21"/>
</dbReference>
<dbReference type="Ensembl" id="ENST00000514555.5">
    <molecule id="P30307-2"/>
    <property type="protein sequence ID" value="ENSP00000425470.1"/>
    <property type="gene ID" value="ENSG00000158402.21"/>
</dbReference>
<dbReference type="GeneID" id="995"/>
<dbReference type="KEGG" id="hsa:995"/>
<dbReference type="MANE-Select" id="ENST00000323760.11">
    <property type="protein sequence ID" value="ENSP00000321656.6"/>
    <property type="RefSeq nucleotide sequence ID" value="NM_001790.5"/>
    <property type="RefSeq protein sequence ID" value="NP_001781.2"/>
</dbReference>
<dbReference type="UCSC" id="uc003lcp.3">
    <molecule id="P30307-1"/>
    <property type="organism name" value="human"/>
</dbReference>
<dbReference type="AGR" id="HGNC:1727"/>
<dbReference type="CTD" id="995"/>
<dbReference type="DisGeNET" id="995"/>
<dbReference type="GeneCards" id="CDC25C"/>
<dbReference type="HGNC" id="HGNC:1727">
    <property type="gene designation" value="CDC25C"/>
</dbReference>
<dbReference type="HPA" id="ENSG00000158402">
    <property type="expression patterns" value="Tissue enhanced (bone marrow, lymphoid tissue, testis)"/>
</dbReference>
<dbReference type="MalaCards" id="CDC25C"/>
<dbReference type="MIM" id="157680">
    <property type="type" value="gene"/>
</dbReference>
<dbReference type="neXtProt" id="NX_P30307"/>
<dbReference type="OpenTargets" id="ENSG00000158402"/>
<dbReference type="PharmGKB" id="PA100"/>
<dbReference type="VEuPathDB" id="HostDB:ENSG00000158402"/>
<dbReference type="eggNOG" id="KOG3772">
    <property type="taxonomic scope" value="Eukaryota"/>
</dbReference>
<dbReference type="GeneTree" id="ENSGT00940000161460"/>
<dbReference type="HOGENOM" id="CLU_014464_4_0_1"/>
<dbReference type="InParanoid" id="P30307"/>
<dbReference type="OMA" id="HLDSKGP"/>
<dbReference type="OrthoDB" id="26523at2759"/>
<dbReference type="PAN-GO" id="P30307">
    <property type="GO annotations" value="6 GO annotations based on evolutionary models"/>
</dbReference>
<dbReference type="PhylomeDB" id="P30307"/>
<dbReference type="TreeFam" id="TF101056"/>
<dbReference type="BRENDA" id="3.1.3.48">
    <property type="organism ID" value="2681"/>
</dbReference>
<dbReference type="PathwayCommons" id="P30307"/>
<dbReference type="Reactome" id="R-HSA-156711">
    <property type="pathway name" value="Polo-like kinase mediated events"/>
</dbReference>
<dbReference type="Reactome" id="R-HSA-176187">
    <property type="pathway name" value="Activation of ATR in response to replication stress"/>
</dbReference>
<dbReference type="Reactome" id="R-HSA-5625740">
    <property type="pathway name" value="RHO GTPases activate PKNs"/>
</dbReference>
<dbReference type="Reactome" id="R-HSA-6804114">
    <property type="pathway name" value="TP53 Regulates Transcription of Genes Involved in G2 Cell Cycle Arrest"/>
</dbReference>
<dbReference type="Reactome" id="R-HSA-6804115">
    <property type="pathway name" value="TP53 regulates transcription of additional cell cycle genes whose exact role in the p53 pathway remain uncertain"/>
</dbReference>
<dbReference type="Reactome" id="R-HSA-69273">
    <property type="pathway name" value="Cyclin A/B1/B2 associated events during G2/M transition"/>
</dbReference>
<dbReference type="Reactome" id="R-HSA-75035">
    <property type="pathway name" value="Chk1/Chk2(Cds1) mediated inactivation of Cyclin B:Cdk1 complex"/>
</dbReference>
<dbReference type="Reactome" id="R-HSA-8862803">
    <property type="pathway name" value="Deregulated CDK5 triggers multiple neurodegenerative pathways in Alzheimer's disease models"/>
</dbReference>
<dbReference type="SignaLink" id="P30307"/>
<dbReference type="SIGNOR" id="P30307"/>
<dbReference type="BioGRID-ORCS" id="995">
    <property type="hits" value="18 hits in 1188 CRISPR screens"/>
</dbReference>
<dbReference type="CD-CODE" id="8C2F96ED">
    <property type="entry name" value="Centrosome"/>
</dbReference>
<dbReference type="ChiTaRS" id="CDC25C">
    <property type="organism name" value="human"/>
</dbReference>
<dbReference type="EvolutionaryTrace" id="P30307"/>
<dbReference type="GeneWiki" id="CDC25C"/>
<dbReference type="GenomeRNAi" id="995"/>
<dbReference type="Pharos" id="P30307">
    <property type="development level" value="Tchem"/>
</dbReference>
<dbReference type="PRO" id="PR:P30307"/>
<dbReference type="Proteomes" id="UP000005640">
    <property type="component" value="Chromosome 5"/>
</dbReference>
<dbReference type="RNAct" id="P30307">
    <property type="molecule type" value="protein"/>
</dbReference>
<dbReference type="Bgee" id="ENSG00000158402">
    <property type="expression patterns" value="Expressed in primordial germ cell in gonad and 120 other cell types or tissues"/>
</dbReference>
<dbReference type="ExpressionAtlas" id="P30307">
    <property type="expression patterns" value="baseline and differential"/>
</dbReference>
<dbReference type="GO" id="GO:0005737">
    <property type="term" value="C:cytoplasm"/>
    <property type="evidence" value="ECO:0000318"/>
    <property type="project" value="GO_Central"/>
</dbReference>
<dbReference type="GO" id="GO:0005829">
    <property type="term" value="C:cytosol"/>
    <property type="evidence" value="ECO:0000314"/>
    <property type="project" value="HPA"/>
</dbReference>
<dbReference type="GO" id="GO:0005758">
    <property type="term" value="C:mitochondrial intermembrane space"/>
    <property type="evidence" value="ECO:0007669"/>
    <property type="project" value="Ensembl"/>
</dbReference>
<dbReference type="GO" id="GO:0016607">
    <property type="term" value="C:nuclear speck"/>
    <property type="evidence" value="ECO:0000314"/>
    <property type="project" value="HPA"/>
</dbReference>
<dbReference type="GO" id="GO:0005654">
    <property type="term" value="C:nucleoplasm"/>
    <property type="evidence" value="ECO:0000314"/>
    <property type="project" value="HPA"/>
</dbReference>
<dbReference type="GO" id="GO:0005634">
    <property type="term" value="C:nucleus"/>
    <property type="evidence" value="ECO:0000314"/>
    <property type="project" value="UniProtKB"/>
</dbReference>
<dbReference type="GO" id="GO:0004721">
    <property type="term" value="F:phosphoprotein phosphatase activity"/>
    <property type="evidence" value="ECO:0000304"/>
    <property type="project" value="Reactome"/>
</dbReference>
<dbReference type="GO" id="GO:0019901">
    <property type="term" value="F:protein kinase binding"/>
    <property type="evidence" value="ECO:0000353"/>
    <property type="project" value="UniProtKB"/>
</dbReference>
<dbReference type="GO" id="GO:0120283">
    <property type="term" value="F:protein serine/threonine kinase binding"/>
    <property type="evidence" value="ECO:0000353"/>
    <property type="project" value="ARUK-UCL"/>
</dbReference>
<dbReference type="GO" id="GO:0004725">
    <property type="term" value="F:protein tyrosine phosphatase activity"/>
    <property type="evidence" value="ECO:0000318"/>
    <property type="project" value="GO_Central"/>
</dbReference>
<dbReference type="GO" id="GO:0050699">
    <property type="term" value="F:WW domain binding"/>
    <property type="evidence" value="ECO:0000353"/>
    <property type="project" value="BHF-UCL"/>
</dbReference>
<dbReference type="GO" id="GO:0051301">
    <property type="term" value="P:cell division"/>
    <property type="evidence" value="ECO:0007669"/>
    <property type="project" value="UniProtKB-KW"/>
</dbReference>
<dbReference type="GO" id="GO:0008283">
    <property type="term" value="P:cell population proliferation"/>
    <property type="evidence" value="ECO:0000304"/>
    <property type="project" value="ProtInc"/>
</dbReference>
<dbReference type="GO" id="GO:0000086">
    <property type="term" value="P:G2/M transition of mitotic cell cycle"/>
    <property type="evidence" value="ECO:0000316"/>
    <property type="project" value="UniProtKB"/>
</dbReference>
<dbReference type="GO" id="GO:0010971">
    <property type="term" value="P:positive regulation of G2/M transition of mitotic cell cycle"/>
    <property type="evidence" value="ECO:0000318"/>
    <property type="project" value="GO_Central"/>
</dbReference>
<dbReference type="GO" id="GO:0110032">
    <property type="term" value="P:positive regulation of G2/MI transition of meiotic cell cycle"/>
    <property type="evidence" value="ECO:0000318"/>
    <property type="project" value="GO_Central"/>
</dbReference>
<dbReference type="GO" id="GO:0000079">
    <property type="term" value="P:regulation of cyclin-dependent protein serine/threonine kinase activity"/>
    <property type="evidence" value="ECO:0000304"/>
    <property type="project" value="UniProtKB"/>
</dbReference>
<dbReference type="GO" id="GO:0007088">
    <property type="term" value="P:regulation of mitotic nuclear division"/>
    <property type="evidence" value="ECO:0000304"/>
    <property type="project" value="ProtInc"/>
</dbReference>
<dbReference type="CDD" id="cd01530">
    <property type="entry name" value="Cdc25"/>
    <property type="match status" value="1"/>
</dbReference>
<dbReference type="DisProt" id="DP02126"/>
<dbReference type="FunFam" id="3.40.250.10:FF:000004">
    <property type="entry name" value="M-phase inducer phosphatase 1 isoform X1"/>
    <property type="match status" value="1"/>
</dbReference>
<dbReference type="Gene3D" id="3.40.250.10">
    <property type="entry name" value="Rhodanese-like domain"/>
    <property type="match status" value="1"/>
</dbReference>
<dbReference type="IDEAL" id="IID00198"/>
<dbReference type="InterPro" id="IPR000751">
    <property type="entry name" value="MPI_Phosphatase"/>
</dbReference>
<dbReference type="InterPro" id="IPR001763">
    <property type="entry name" value="Rhodanese-like_dom"/>
</dbReference>
<dbReference type="InterPro" id="IPR036873">
    <property type="entry name" value="Rhodanese-like_dom_sf"/>
</dbReference>
<dbReference type="PANTHER" id="PTHR10828:SF64">
    <property type="entry name" value="M-PHASE INDUCER PHOSPHATASE 3"/>
    <property type="match status" value="1"/>
</dbReference>
<dbReference type="PANTHER" id="PTHR10828">
    <property type="entry name" value="M-PHASE INDUCER PHOSPHATASE DUAL SPECIFICITY PHOSPHATASE CDC25"/>
    <property type="match status" value="1"/>
</dbReference>
<dbReference type="Pfam" id="PF06617">
    <property type="entry name" value="M-inducer_phosp"/>
    <property type="match status" value="1"/>
</dbReference>
<dbReference type="Pfam" id="PF00581">
    <property type="entry name" value="Rhodanese"/>
    <property type="match status" value="1"/>
</dbReference>
<dbReference type="PRINTS" id="PR00716">
    <property type="entry name" value="MPIPHPHTASE"/>
</dbReference>
<dbReference type="SMART" id="SM00450">
    <property type="entry name" value="RHOD"/>
    <property type="match status" value="1"/>
</dbReference>
<dbReference type="SUPFAM" id="SSF52821">
    <property type="entry name" value="Rhodanese/Cell cycle control phosphatase"/>
    <property type="match status" value="1"/>
</dbReference>
<dbReference type="PROSITE" id="PS50206">
    <property type="entry name" value="RHODANESE_3"/>
    <property type="match status" value="1"/>
</dbReference>
<gene>
    <name type="primary">CDC25C</name>
</gene>
<feature type="initiator methionine" description="Removed" evidence="25">
    <location>
        <position position="1"/>
    </location>
</feature>
<feature type="chain" id="PRO_0000198647" description="M-phase inducer phosphatase 3">
    <location>
        <begin position="2"/>
        <end position="473"/>
    </location>
</feature>
<feature type="domain" description="Rhodanese" evidence="2">
    <location>
        <begin position="321"/>
        <end position="428"/>
    </location>
</feature>
<feature type="region of interest" description="Disordered" evidence="3">
    <location>
        <begin position="1"/>
        <end position="23"/>
    </location>
</feature>
<feature type="region of interest" description="Disordered" evidence="3">
    <location>
        <begin position="132"/>
        <end position="158"/>
    </location>
</feature>
<feature type="region of interest" description="HIV-1 Vpr binding site">
    <location>
        <begin position="334"/>
        <end position="379"/>
    </location>
</feature>
<feature type="compositionally biased region" description="Polar residues" evidence="3">
    <location>
        <begin position="145"/>
        <end position="158"/>
    </location>
</feature>
<feature type="active site" evidence="1">
    <location>
        <position position="377"/>
    </location>
</feature>
<feature type="modified residue" description="N-acetylserine" evidence="25">
    <location>
        <position position="2"/>
    </location>
</feature>
<feature type="modified residue" description="Phosphoserine" evidence="26">
    <location>
        <position position="20"/>
    </location>
</feature>
<feature type="modified residue" description="Phosphoserine" evidence="22 26">
    <location>
        <position position="38"/>
    </location>
</feature>
<feature type="modified residue" description="Phosphothreonine" evidence="17 22">
    <location>
        <position position="48"/>
    </location>
</feature>
<feature type="modified residue" description="Phosphoserine" evidence="22">
    <location>
        <position position="57"/>
    </location>
</feature>
<feature type="modified residue" description="Phosphoserine" evidence="22 24">
    <location>
        <position position="61"/>
    </location>
</feature>
<feature type="modified residue" description="Phosphoserine" evidence="22 23 24">
    <location>
        <position position="64"/>
    </location>
</feature>
<feature type="modified residue" description="Phosphothreonine" evidence="17 22 24">
    <location>
        <position position="67"/>
    </location>
</feature>
<feature type="modified residue" description="Phosphoserine; by CDK1" evidence="21">
    <location>
        <position position="122"/>
    </location>
</feature>
<feature type="modified residue" description="Phosphoserine" evidence="8">
    <location>
        <position position="129"/>
    </location>
</feature>
<feature type="modified residue" description="Phosphothreonine" evidence="8">
    <location>
        <position position="130"/>
    </location>
</feature>
<feature type="modified residue" description="Phosphoserine" evidence="17 23">
    <location>
        <position position="168"/>
    </location>
</feature>
<feature type="modified residue" description="Phosphoserine; by PLK3" evidence="10">
    <location>
        <position position="191"/>
    </location>
</feature>
<feature type="modified residue" description="Phosphoserine; by PLK3" evidence="10">
    <location>
        <position position="198"/>
    </location>
</feature>
<feature type="modified residue" description="Phosphoserine; by CDK1" evidence="21">
    <location>
        <position position="214"/>
    </location>
</feature>
<feature type="modified residue" description="Phosphoserine; by CHEK1, CHEK2, BRSK1, MAPK14 AND MARK3" evidence="7 12 14 26">
    <location>
        <position position="216"/>
    </location>
</feature>
<feature type="modified residue" description="Phosphoserine" evidence="23">
    <location>
        <position position="472"/>
    </location>
</feature>
<feature type="splice variant" id="VSP_000863" description="In isoform 4 and isoform 5." evidence="18 19">
    <original>GTPKRCLDLSNLSSGEITATQLTTSADLDETGHLDSSGLQEVHLAGMNHDQHLMKCSP</original>
    <variation>SPGFFRTSGSAFSWD</variation>
    <location>
        <begin position="66"/>
        <end position="123"/>
    </location>
</feature>
<feature type="splice variant" id="VSP_000864" description="In isoform 2 and isoform 5." evidence="18 19">
    <location>
        <begin position="124"/>
        <end position="153"/>
    </location>
</feature>
<feature type="sequence variant" id="VAR_027922" description="In dbSNP:rs11567959.">
    <original>S</original>
    <variation>N</variation>
    <location>
        <position position="14"/>
    </location>
</feature>
<feature type="sequence variant" id="VAR_027923" description="In dbSNP:rs3734166." evidence="5 13 16">
    <original>R</original>
    <variation>C</variation>
    <location>
        <position position="70"/>
    </location>
</feature>
<feature type="sequence variant" id="VAR_027924" description="In dbSNP:rs11567962.">
    <original>S</original>
    <variation>N</variation>
    <location>
        <position position="78"/>
    </location>
</feature>
<feature type="sequence variant" id="VAR_020146" description="In dbSNP:rs11567997.">
    <original>G</original>
    <variation>R</variation>
    <location>
        <position position="297"/>
    </location>
</feature>
<feature type="mutagenesis site" description="Loss of phosphorylation. Severely impairs PLK1-binding." evidence="8">
    <original>S</original>
    <variation>V</variation>
    <location>
        <position position="129"/>
    </location>
</feature>
<feature type="mutagenesis site" description="Loss of phosphorylation. Severely impairs PLK1-binding." evidence="8">
    <original>T</original>
    <variation>A</variation>
    <location>
        <position position="130"/>
    </location>
</feature>
<feature type="mutagenesis site" description="Facilitates nuclear exclusion." evidence="10">
    <original>S</original>
    <variation>A</variation>
    <location>
        <position position="191"/>
    </location>
</feature>
<feature type="mutagenesis site" description="Mimicks phosphorylation state, leading to enhanced accumulation in the nucleus." evidence="10">
    <original>S</original>
    <variation>D</variation>
    <location>
        <position position="191"/>
    </location>
</feature>
<feature type="mutagenesis site" description="Reduces phosphorylation by MARK3 and CHEK1." evidence="9">
    <original>L</original>
    <variation>A</variation>
    <location>
        <position position="211"/>
    </location>
</feature>
<feature type="mutagenesis site" description="No effect on interaction with MARK3. Abolishes phosphorylation by MARK3." evidence="9">
    <original>S</original>
    <variation>A</variation>
    <location>
        <position position="216"/>
    </location>
</feature>
<feature type="mutagenesis site" description="Abolishes interaction with MARK3. Reduces phosphorylation of S-216 by MARK3." evidence="9">
    <original>L</original>
    <variation>A</variation>
    <location>
        <position position="221"/>
    </location>
</feature>
<feature type="mutagenesis site" description="No effect on interaction with MARK3." evidence="9">
    <original>KKK</original>
    <variation>AAA</variation>
    <location>
        <begin position="242"/>
        <end position="244"/>
    </location>
</feature>
<feature type="mutagenesis site" description="Partial loss of HIV-1 Vpr binding." evidence="11">
    <original>E</original>
    <variation>K</variation>
    <location>
        <position position="352"/>
    </location>
</feature>
<feature type="mutagenesis site" description="No effect on HIV-1 Vpr binding." evidence="11">
    <original>K</original>
    <variation>E</variation>
    <location>
        <position position="359"/>
    </location>
</feature>
<feature type="strand" evidence="27">
    <location>
        <begin position="127"/>
        <end position="129"/>
    </location>
</feature>
<feature type="strand" evidence="28">
    <location>
        <begin position="286"/>
        <end position="289"/>
    </location>
</feature>
<feature type="strand" evidence="28">
    <location>
        <begin position="300"/>
        <end position="305"/>
    </location>
</feature>
<feature type="helix" evidence="28">
    <location>
        <begin position="307"/>
        <end position="314"/>
    </location>
</feature>
<feature type="turn" evidence="28">
    <location>
        <begin position="315"/>
        <end position="321"/>
    </location>
</feature>
<feature type="strand" evidence="28">
    <location>
        <begin position="322"/>
        <end position="329"/>
    </location>
</feature>
<feature type="helix" evidence="28">
    <location>
        <begin position="333"/>
        <end position="337"/>
    </location>
</feature>
<feature type="strand" evidence="28">
    <location>
        <begin position="339"/>
        <end position="341"/>
    </location>
</feature>
<feature type="helix" evidence="28">
    <location>
        <begin position="350"/>
        <end position="357"/>
    </location>
</feature>
<feature type="strand" evidence="28">
    <location>
        <begin position="369"/>
        <end position="376"/>
    </location>
</feature>
<feature type="helix" evidence="28">
    <location>
        <begin position="384"/>
        <end position="397"/>
    </location>
</feature>
<feature type="strand" evidence="28">
    <location>
        <begin position="409"/>
        <end position="412"/>
    </location>
</feature>
<feature type="helix" evidence="28">
    <location>
        <begin position="415"/>
        <end position="419"/>
    </location>
</feature>
<feature type="turn" evidence="28">
    <location>
        <begin position="420"/>
        <end position="422"/>
    </location>
</feature>
<feature type="helix" evidence="28">
    <location>
        <begin position="424"/>
        <end position="426"/>
    </location>
</feature>
<feature type="strand" evidence="28">
    <location>
        <begin position="427"/>
        <end position="430"/>
    </location>
</feature>
<feature type="strand" evidence="28">
    <location>
        <begin position="438"/>
        <end position="440"/>
    </location>
</feature>
<feature type="modified residue" description="Phosphoserine" evidence="20">
    <location sequence="P30307-3">
        <position position="61"/>
    </location>
</feature>
<feature type="modified residue" description="Phosphoserine" evidence="20">
    <location sequence="P30307-4">
        <position position="61"/>
    </location>
</feature>
<accession>P30307</accession>
<accession>D3DQB8</accession>
<accession>Q96PL3</accession>
<accession>Q9H168</accession>
<accession>Q9H2E8</accession>
<accession>Q9H2E9</accession>
<accession>Q9H2F1</accession>
<name>MPIP3_HUMAN</name>